<organism>
    <name type="scientific">Jannaschia sp. (strain CCS1)</name>
    <dbReference type="NCBI Taxonomy" id="290400"/>
    <lineage>
        <taxon>Bacteria</taxon>
        <taxon>Pseudomonadati</taxon>
        <taxon>Pseudomonadota</taxon>
        <taxon>Alphaproteobacteria</taxon>
        <taxon>Rhodobacterales</taxon>
        <taxon>Roseobacteraceae</taxon>
        <taxon>Jannaschia</taxon>
    </lineage>
</organism>
<gene>
    <name evidence="1" type="primary">rplJ</name>
    <name type="ordered locus">Jann_0566</name>
</gene>
<reference key="1">
    <citation type="submission" date="2006-02" db="EMBL/GenBank/DDBJ databases">
        <title>Complete sequence of chromosome of Jannaschia sp. CCS1.</title>
        <authorList>
            <consortium name="US DOE Joint Genome Institute"/>
            <person name="Copeland A."/>
            <person name="Lucas S."/>
            <person name="Lapidus A."/>
            <person name="Barry K."/>
            <person name="Detter J.C."/>
            <person name="Glavina del Rio T."/>
            <person name="Hammon N."/>
            <person name="Israni S."/>
            <person name="Pitluck S."/>
            <person name="Brettin T."/>
            <person name="Bruce D."/>
            <person name="Han C."/>
            <person name="Tapia R."/>
            <person name="Gilna P."/>
            <person name="Chertkov O."/>
            <person name="Saunders E."/>
            <person name="Schmutz J."/>
            <person name="Larimer F."/>
            <person name="Land M."/>
            <person name="Kyrpides N."/>
            <person name="Lykidis A."/>
            <person name="Moran M.A."/>
            <person name="Belas R."/>
            <person name="Ye W."/>
            <person name="Buchan A."/>
            <person name="Gonzalez J.M."/>
            <person name="Schell M.A."/>
            <person name="Richardson P."/>
        </authorList>
    </citation>
    <scope>NUCLEOTIDE SEQUENCE [LARGE SCALE GENOMIC DNA]</scope>
    <source>
        <strain>CCS1</strain>
    </source>
</reference>
<accession>Q28UX9</accession>
<feature type="chain" id="PRO_1000005514" description="Large ribosomal subunit protein uL10">
    <location>
        <begin position="1"/>
        <end position="170"/>
    </location>
</feature>
<evidence type="ECO:0000255" key="1">
    <source>
        <dbReference type="HAMAP-Rule" id="MF_00362"/>
    </source>
</evidence>
<evidence type="ECO:0000305" key="2"/>
<dbReference type="EMBL" id="CP000264">
    <property type="protein sequence ID" value="ABD53483.1"/>
    <property type="molecule type" value="Genomic_DNA"/>
</dbReference>
<dbReference type="RefSeq" id="WP_011453692.1">
    <property type="nucleotide sequence ID" value="NC_007802.1"/>
</dbReference>
<dbReference type="SMR" id="Q28UX9"/>
<dbReference type="STRING" id="290400.Jann_0566"/>
<dbReference type="KEGG" id="jan:Jann_0566"/>
<dbReference type="eggNOG" id="COG0244">
    <property type="taxonomic scope" value="Bacteria"/>
</dbReference>
<dbReference type="HOGENOM" id="CLU_092227_0_0_5"/>
<dbReference type="OrthoDB" id="9791972at2"/>
<dbReference type="Proteomes" id="UP000008326">
    <property type="component" value="Chromosome"/>
</dbReference>
<dbReference type="GO" id="GO:0015934">
    <property type="term" value="C:large ribosomal subunit"/>
    <property type="evidence" value="ECO:0007669"/>
    <property type="project" value="InterPro"/>
</dbReference>
<dbReference type="GO" id="GO:0070180">
    <property type="term" value="F:large ribosomal subunit rRNA binding"/>
    <property type="evidence" value="ECO:0007669"/>
    <property type="project" value="UniProtKB-UniRule"/>
</dbReference>
<dbReference type="GO" id="GO:0003735">
    <property type="term" value="F:structural constituent of ribosome"/>
    <property type="evidence" value="ECO:0007669"/>
    <property type="project" value="InterPro"/>
</dbReference>
<dbReference type="GO" id="GO:0006412">
    <property type="term" value="P:translation"/>
    <property type="evidence" value="ECO:0007669"/>
    <property type="project" value="UniProtKB-UniRule"/>
</dbReference>
<dbReference type="CDD" id="cd05797">
    <property type="entry name" value="Ribosomal_L10"/>
    <property type="match status" value="1"/>
</dbReference>
<dbReference type="Gene3D" id="3.30.70.1730">
    <property type="match status" value="1"/>
</dbReference>
<dbReference type="Gene3D" id="6.10.250.290">
    <property type="match status" value="1"/>
</dbReference>
<dbReference type="HAMAP" id="MF_00362">
    <property type="entry name" value="Ribosomal_uL10"/>
    <property type="match status" value="1"/>
</dbReference>
<dbReference type="InterPro" id="IPR001790">
    <property type="entry name" value="Ribosomal_uL10"/>
</dbReference>
<dbReference type="InterPro" id="IPR043141">
    <property type="entry name" value="Ribosomal_uL10-like_sf"/>
</dbReference>
<dbReference type="InterPro" id="IPR022973">
    <property type="entry name" value="Ribosomal_uL10_bac"/>
</dbReference>
<dbReference type="InterPro" id="IPR047865">
    <property type="entry name" value="Ribosomal_uL10_bac_type"/>
</dbReference>
<dbReference type="InterPro" id="IPR002363">
    <property type="entry name" value="Ribosomal_uL10_CS_bac"/>
</dbReference>
<dbReference type="NCBIfam" id="NF000955">
    <property type="entry name" value="PRK00099.1-1"/>
    <property type="match status" value="1"/>
</dbReference>
<dbReference type="PANTHER" id="PTHR11560">
    <property type="entry name" value="39S RIBOSOMAL PROTEIN L10, MITOCHONDRIAL"/>
    <property type="match status" value="1"/>
</dbReference>
<dbReference type="Pfam" id="PF00466">
    <property type="entry name" value="Ribosomal_L10"/>
    <property type="match status" value="1"/>
</dbReference>
<dbReference type="SUPFAM" id="SSF160369">
    <property type="entry name" value="Ribosomal protein L10-like"/>
    <property type="match status" value="1"/>
</dbReference>
<dbReference type="PROSITE" id="PS01109">
    <property type="entry name" value="RIBOSOMAL_L10"/>
    <property type="match status" value="1"/>
</dbReference>
<protein>
    <recommendedName>
        <fullName evidence="1">Large ribosomal subunit protein uL10</fullName>
    </recommendedName>
    <alternativeName>
        <fullName evidence="2">50S ribosomal protein L10</fullName>
    </alternativeName>
</protein>
<keyword id="KW-1185">Reference proteome</keyword>
<keyword id="KW-0687">Ribonucleoprotein</keyword>
<keyword id="KW-0689">Ribosomal protein</keyword>
<keyword id="KW-0694">RNA-binding</keyword>
<keyword id="KW-0699">rRNA-binding</keyword>
<sequence>MDRAQKEKVVEELGQIFESSGVVVVAHYQGLTVANMQDLRGRVRDAGGAVRVAKNKLAKIALDGTDVAGISDLMTGMTVLAYSDDPVAAAKAADEFAKENDNYVILGGAMGENILDADGVKAVAKMPSREELISSIAGCIGAPAANIAGAIGAPASNIASVLSTIEEKAA</sequence>
<comment type="function">
    <text evidence="1">Forms part of the ribosomal stalk, playing a central role in the interaction of the ribosome with GTP-bound translation factors.</text>
</comment>
<comment type="subunit">
    <text evidence="1">Part of the ribosomal stalk of the 50S ribosomal subunit. The N-terminus interacts with L11 and the large rRNA to form the base of the stalk. The C-terminus forms an elongated spine to which L12 dimers bind in a sequential fashion forming a multimeric L10(L12)X complex.</text>
</comment>
<comment type="similarity">
    <text evidence="1">Belongs to the universal ribosomal protein uL10 family.</text>
</comment>
<name>RL10_JANSC</name>
<proteinExistence type="inferred from homology"/>